<feature type="transit peptide" description="Mitochondrion" evidence="1">
    <location>
        <begin position="1"/>
        <end position="32"/>
    </location>
</feature>
<feature type="chain" id="PRO_0000284928" description="3-hydroxyisobutyryl-CoA hydrolase, mitochondrial">
    <location>
        <begin position="33"/>
        <end position="386"/>
    </location>
</feature>
<feature type="binding site" evidence="1">
    <location>
        <position position="121"/>
    </location>
    <ligand>
        <name>substrate</name>
    </ligand>
</feature>
<feature type="binding site" evidence="1">
    <location>
        <position position="146"/>
    </location>
    <ligand>
        <name>substrate</name>
    </ligand>
</feature>
<feature type="binding site" evidence="1">
    <location>
        <position position="169"/>
    </location>
    <ligand>
        <name>substrate</name>
    </ligand>
</feature>
<feature type="binding site" evidence="1">
    <location>
        <position position="177"/>
    </location>
    <ligand>
        <name>substrate</name>
    </ligand>
</feature>
<feature type="modified residue" description="N6-acetyllysine; alternate" evidence="2">
    <location>
        <position position="92"/>
    </location>
</feature>
<feature type="modified residue" description="N6-succinyllysine; alternate" evidence="3">
    <location>
        <position position="92"/>
    </location>
</feature>
<feature type="modified residue" description="N6-acetyllysine; alternate" evidence="3">
    <location>
        <position position="221"/>
    </location>
</feature>
<feature type="modified residue" description="N6-succinyllysine; alternate" evidence="3">
    <location>
        <position position="221"/>
    </location>
</feature>
<feature type="modified residue" description="Phosphoserine" evidence="2">
    <location>
        <position position="234"/>
    </location>
</feature>
<feature type="modified residue" description="N6-succinyllysine" evidence="3">
    <location>
        <position position="250"/>
    </location>
</feature>
<feature type="modified residue" description="N6-succinyllysine" evidence="3">
    <location>
        <position position="257"/>
    </location>
</feature>
<feature type="modified residue" description="N6-acetyllysine; alternate" evidence="3">
    <location>
        <position position="297"/>
    </location>
</feature>
<feature type="modified residue" description="N6-succinyllysine; alternate" evidence="3">
    <location>
        <position position="297"/>
    </location>
</feature>
<feature type="modified residue" description="N6-succinyllysine" evidence="3">
    <location>
        <position position="301"/>
    </location>
</feature>
<feature type="modified residue" description="N6-acetyllysine; alternate" evidence="3">
    <location>
        <position position="353"/>
    </location>
</feature>
<feature type="modified residue" description="N6-succinyllysine; alternate" evidence="3">
    <location>
        <position position="353"/>
    </location>
</feature>
<feature type="modified residue" description="Phosphoserine" evidence="2">
    <location>
        <position position="356"/>
    </location>
</feature>
<feature type="modified residue" description="N6-acetyllysine" evidence="3">
    <location>
        <position position="360"/>
    </location>
</feature>
<feature type="modified residue" description="N6-acetyllysine" evidence="3">
    <location>
        <position position="365"/>
    </location>
</feature>
<feature type="modified residue" description="N6-succinyllysine" evidence="3">
    <location>
        <position position="377"/>
    </location>
</feature>
<comment type="function">
    <text evidence="1">Hydrolyzes 3-hydroxyisobutyryl-CoA (HIBYL-CoA), a saline catabolite. Has high activity toward isobutyryl-CoA. Could be an isobutyryl-CoA dehydrogenase that functions in valine catabolism. Also hydrolyzes 3-hydroxypropanoyl-CoA (By similarity).</text>
</comment>
<comment type="catalytic activity">
    <reaction>
        <text>3-hydroxy-2-methylpropanoyl-CoA + H2O = 3-hydroxy-2-methylpropanoate + CoA + H(+)</text>
        <dbReference type="Rhea" id="RHEA:20888"/>
        <dbReference type="ChEBI" id="CHEBI:11805"/>
        <dbReference type="ChEBI" id="CHEBI:15377"/>
        <dbReference type="ChEBI" id="CHEBI:15378"/>
        <dbReference type="ChEBI" id="CHEBI:57287"/>
        <dbReference type="ChEBI" id="CHEBI:57340"/>
        <dbReference type="EC" id="3.1.2.4"/>
    </reaction>
</comment>
<comment type="pathway">
    <text>Amino-acid degradation; L-valine degradation.</text>
</comment>
<comment type="subcellular location">
    <subcellularLocation>
        <location evidence="1">Mitochondrion</location>
    </subcellularLocation>
</comment>
<comment type="similarity">
    <text evidence="4">Belongs to the enoyl-CoA hydratase/isomerase family.</text>
</comment>
<proteinExistence type="evidence at transcript level"/>
<gene>
    <name type="primary">HIBCH</name>
</gene>
<reference key="1">
    <citation type="submission" date="2006-02" db="EMBL/GenBank/DDBJ databases">
        <authorList>
            <consortium name="NIH - Mammalian Gene Collection (MGC) project"/>
        </authorList>
    </citation>
    <scope>NUCLEOTIDE SEQUENCE [LARGE SCALE MRNA]</scope>
    <source>
        <strain>Hereford</strain>
        <tissue>Uterus</tissue>
    </source>
</reference>
<accession>Q2HJ73</accession>
<keyword id="KW-0007">Acetylation</keyword>
<keyword id="KW-0101">Branched-chain amino acid catabolism</keyword>
<keyword id="KW-0378">Hydrolase</keyword>
<keyword id="KW-0496">Mitochondrion</keyword>
<keyword id="KW-0597">Phosphoprotein</keyword>
<keyword id="KW-1185">Reference proteome</keyword>
<keyword id="KW-0809">Transit peptide</keyword>
<dbReference type="EC" id="3.1.2.4"/>
<dbReference type="EMBL" id="BC113274">
    <property type="protein sequence ID" value="AAI13275.1"/>
    <property type="molecule type" value="mRNA"/>
</dbReference>
<dbReference type="RefSeq" id="XP_010800133.1">
    <property type="nucleotide sequence ID" value="XM_010801831.1"/>
</dbReference>
<dbReference type="RefSeq" id="XP_015317723.1">
    <property type="nucleotide sequence ID" value="XM_015462237.1"/>
</dbReference>
<dbReference type="SMR" id="Q2HJ73"/>
<dbReference type="FunCoup" id="Q2HJ73">
    <property type="interactions" value="2263"/>
</dbReference>
<dbReference type="STRING" id="9913.ENSBTAP00000061130"/>
<dbReference type="PeptideAtlas" id="Q2HJ73"/>
<dbReference type="InParanoid" id="Q2HJ73"/>
<dbReference type="OrthoDB" id="1737613at2759"/>
<dbReference type="UniPathway" id="UPA00362"/>
<dbReference type="Proteomes" id="UP000009136">
    <property type="component" value="Unplaced"/>
</dbReference>
<dbReference type="GO" id="GO:0005739">
    <property type="term" value="C:mitochondrion"/>
    <property type="evidence" value="ECO:0000318"/>
    <property type="project" value="GO_Central"/>
</dbReference>
<dbReference type="GO" id="GO:0003860">
    <property type="term" value="F:3-hydroxyisobutyryl-CoA hydrolase activity"/>
    <property type="evidence" value="ECO:0000318"/>
    <property type="project" value="GO_Central"/>
</dbReference>
<dbReference type="GO" id="GO:0006574">
    <property type="term" value="P:valine catabolic process"/>
    <property type="evidence" value="ECO:0000318"/>
    <property type="project" value="GO_Central"/>
</dbReference>
<dbReference type="CDD" id="cd06558">
    <property type="entry name" value="crotonase-like"/>
    <property type="match status" value="1"/>
</dbReference>
<dbReference type="FunFam" id="3.90.226.10:FF:000026">
    <property type="entry name" value="3-hydroxyisobutyryl-CoA hydrolase, mitochondrial"/>
    <property type="match status" value="1"/>
</dbReference>
<dbReference type="Gene3D" id="3.90.226.10">
    <property type="entry name" value="2-enoyl-CoA Hydratase, Chain A, domain 1"/>
    <property type="match status" value="1"/>
</dbReference>
<dbReference type="InterPro" id="IPR029045">
    <property type="entry name" value="ClpP/crotonase-like_dom_sf"/>
</dbReference>
<dbReference type="InterPro" id="IPR045004">
    <property type="entry name" value="ECH_dom"/>
</dbReference>
<dbReference type="InterPro" id="IPR032259">
    <property type="entry name" value="HIBYL-CoA-H"/>
</dbReference>
<dbReference type="NCBIfam" id="NF004127">
    <property type="entry name" value="PRK05617.1"/>
    <property type="match status" value="1"/>
</dbReference>
<dbReference type="PANTHER" id="PTHR43176:SF3">
    <property type="entry name" value="3-HYDROXYISOBUTYRYL-COA HYDROLASE, MITOCHONDRIAL"/>
    <property type="match status" value="1"/>
</dbReference>
<dbReference type="PANTHER" id="PTHR43176">
    <property type="entry name" value="3-HYDROXYISOBUTYRYL-COA HYDROLASE-RELATED"/>
    <property type="match status" value="1"/>
</dbReference>
<dbReference type="Pfam" id="PF16113">
    <property type="entry name" value="ECH_2"/>
    <property type="match status" value="1"/>
</dbReference>
<dbReference type="SUPFAM" id="SSF52096">
    <property type="entry name" value="ClpP/crotonase"/>
    <property type="match status" value="1"/>
</dbReference>
<protein>
    <recommendedName>
        <fullName>3-hydroxyisobutyryl-CoA hydrolase, mitochondrial</fullName>
        <ecNumber>3.1.2.4</ecNumber>
    </recommendedName>
    <alternativeName>
        <fullName>3-hydroxyisobutyryl-coenzyme A hydrolase</fullName>
        <shortName>HIB-CoA hydrolase</shortName>
        <shortName>HIBYL-CoA-H</shortName>
    </alternativeName>
</protein>
<name>HIBCH_BOVIN</name>
<evidence type="ECO:0000250" key="1"/>
<evidence type="ECO:0000250" key="2">
    <source>
        <dbReference type="UniProtKB" id="Q6NVY1"/>
    </source>
</evidence>
<evidence type="ECO:0000250" key="3">
    <source>
        <dbReference type="UniProtKB" id="Q8QZS1"/>
    </source>
</evidence>
<evidence type="ECO:0000305" key="4"/>
<sequence>MGLQGLCRLMSRFNSYKRTNIILQHLKMSNHTDAAAEVLLERKGCAGVITLNRPRFLNTLTLGMIRQIYAQLKKWEQDPKTFLIIIKGAGEKAFCAGGDIRALSEARNTNQKMLQDLFREEYILNNAIDSCQKPYIALIHGITMGGGVGVSVHGQFRVATEKSVFAMPETAIGLFPDVGGGYFLPRLQGKLGYFLALTGFRLKGRDVYTAGIATHFVDFEKLGMLEEDLLALKSPSKENIADVLETYHAKSKTDQDKPFILEEHMDKINSWFSANTVEQIVDNLQQDGSSFALEQLKVIKKMSPTSLKITLRQLMEGSSKTLPEVLIMEYRLSQACMKGHDFHEGVRAVLIDKDQSPKWKPADLKEVTDEDLNDYFKSLGSNDLKF</sequence>
<organism>
    <name type="scientific">Bos taurus</name>
    <name type="common">Bovine</name>
    <dbReference type="NCBI Taxonomy" id="9913"/>
    <lineage>
        <taxon>Eukaryota</taxon>
        <taxon>Metazoa</taxon>
        <taxon>Chordata</taxon>
        <taxon>Craniata</taxon>
        <taxon>Vertebrata</taxon>
        <taxon>Euteleostomi</taxon>
        <taxon>Mammalia</taxon>
        <taxon>Eutheria</taxon>
        <taxon>Laurasiatheria</taxon>
        <taxon>Artiodactyla</taxon>
        <taxon>Ruminantia</taxon>
        <taxon>Pecora</taxon>
        <taxon>Bovidae</taxon>
        <taxon>Bovinae</taxon>
        <taxon>Bos</taxon>
    </lineage>
</organism>